<gene>
    <name type="primary">16</name>
</gene>
<feature type="initiator methionine" description="Removed; by host" evidence="3">
    <location>
        <position position="1"/>
    </location>
</feature>
<feature type="chain" id="PRO_0000164721" description="Probable capsid assembly scaffolding protein">
    <location>
        <begin position="2"/>
        <end position="173"/>
    </location>
</feature>
<feature type="region of interest" description="Disordered" evidence="2">
    <location>
        <begin position="1"/>
        <end position="27"/>
    </location>
</feature>
<feature type="region of interest" description="Disordered" evidence="2">
    <location>
        <begin position="134"/>
        <end position="158"/>
    </location>
</feature>
<feature type="coiled-coil region" evidence="1">
    <location>
        <begin position="36"/>
        <end position="84"/>
    </location>
</feature>
<feature type="compositionally biased region" description="Low complexity" evidence="2">
    <location>
        <begin position="1"/>
        <end position="13"/>
    </location>
</feature>
<accession>Q05222</accession>
<keyword id="KW-0175">Coiled coil</keyword>
<keyword id="KW-0903">Direct protein sequencing</keyword>
<keyword id="KW-1185">Reference proteome</keyword>
<keyword id="KW-0118">Viral capsid assembly</keyword>
<keyword id="KW-1188">Viral release from host cell</keyword>
<proteinExistence type="evidence at protein level"/>
<evidence type="ECO:0000255" key="1"/>
<evidence type="ECO:0000256" key="2">
    <source>
        <dbReference type="SAM" id="MobiDB-lite"/>
    </source>
</evidence>
<evidence type="ECO:0000269" key="3">
    <source>
    </source>
</evidence>
<evidence type="ECO:0000305" key="4"/>
<dbReference type="EMBL" id="Z18946">
    <property type="protein sequence ID" value="CAA79392.1"/>
    <property type="molecule type" value="Genomic_DNA"/>
</dbReference>
<dbReference type="PIR" id="S30961">
    <property type="entry name" value="S30961"/>
</dbReference>
<dbReference type="RefSeq" id="NP_039680.1">
    <property type="nucleotide sequence ID" value="NC_001335.1"/>
</dbReference>
<dbReference type="SMR" id="Q05222"/>
<dbReference type="GeneID" id="2942928"/>
<dbReference type="KEGG" id="vg:2942928"/>
<dbReference type="OrthoDB" id="15003at10239"/>
<dbReference type="Proteomes" id="UP000002123">
    <property type="component" value="Genome"/>
</dbReference>
<name>SCAF_BPML5</name>
<organismHost>
    <name type="scientific">Mycobacterium</name>
    <dbReference type="NCBI Taxonomy" id="1763"/>
</organismHost>
<organism>
    <name type="scientific">Mycobacterium phage L5</name>
    <name type="common">Mycobacteriophage L5</name>
    <dbReference type="NCBI Taxonomy" id="31757"/>
    <lineage>
        <taxon>Viruses</taxon>
        <taxon>Duplodnaviria</taxon>
        <taxon>Heunggongvirae</taxon>
        <taxon>Uroviricota</taxon>
        <taxon>Caudoviricetes</taxon>
        <taxon>Fromanvirus</taxon>
    </lineage>
</organism>
<reference key="1">
    <citation type="journal article" date="1993" name="Mol. Microbiol.">
        <title>DNA sequence, structure and gene expression of mycobacteriophage L5: a phage system for mycobacterial genetics.</title>
        <authorList>
            <person name="Hatfull G.F."/>
            <person name="Sarkis G.J."/>
        </authorList>
    </citation>
    <scope>NUCLEOTIDE SEQUENCE [GENOMIC DNA]</scope>
    <scope>PROTEIN SEQUENCE OF 2-16</scope>
</reference>
<sequence>MSDNPTPESTPEAETPEVEKPMEPQGKVFDEAYVQSLRQEAAAARVAKKDAVEAAEARVKAEYEAKLAERDTAYTELQNQLGQAWIELEKVYLSLDAKVPNDKVRAFVEILEGNDRDSIAESVKSRLELVGGFGNKTPSPAFDPSQGRGGKPPIPLNGDPILEAIKAAVGIKK</sequence>
<comment type="function">
    <text evidence="4">Scaffolding protein involved in the icosahedric procapsid assembly. Coassembles with the capsid proteins to form the procapsid, in which the scaffolding protein is found within the external shell of icosahedrally arranged capsid protein subunits.</text>
</comment>
<comment type="similarity">
    <text evidence="4">Belongs to the L5likevirus scaffolding protein family.</text>
</comment>
<protein>
    <recommendedName>
        <fullName>Probable capsid assembly scaffolding protein</fullName>
    </recommendedName>
    <alternativeName>
        <fullName>Gene product 22</fullName>
        <shortName>gp22</shortName>
    </alternativeName>
    <alternativeName>
        <fullName evidence="4">Head morphogenesis protein</fullName>
    </alternativeName>
    <alternativeName>
        <fullName>Scaffold protein</fullName>
    </alternativeName>
</protein>